<gene>
    <name evidence="6" type="primary">fabV</name>
    <name type="ordered locus">TDE_0597</name>
</gene>
<organism>
    <name type="scientific">Treponema denticola (strain ATCC 35405 / DSM 14222 / CIP 103919 / JCM 8153 / KCTC 15104)</name>
    <dbReference type="NCBI Taxonomy" id="243275"/>
    <lineage>
        <taxon>Bacteria</taxon>
        <taxon>Pseudomonadati</taxon>
        <taxon>Spirochaetota</taxon>
        <taxon>Spirochaetia</taxon>
        <taxon>Spirochaetales</taxon>
        <taxon>Treponemataceae</taxon>
        <taxon>Treponema</taxon>
    </lineage>
</organism>
<evidence type="ECO:0000255" key="1">
    <source>
        <dbReference type="HAMAP-Rule" id="MF_01838"/>
    </source>
</evidence>
<evidence type="ECO:0000269" key="2">
    <source>
    </source>
</evidence>
<evidence type="ECO:0000269" key="3">
    <source>
    </source>
</evidence>
<evidence type="ECO:0000269" key="4">
    <source>
    </source>
</evidence>
<evidence type="ECO:0000269" key="5">
    <source>
    </source>
</evidence>
<evidence type="ECO:0000303" key="6">
    <source>
    </source>
</evidence>
<evidence type="ECO:0000305" key="7"/>
<evidence type="ECO:0000305" key="8">
    <source>
    </source>
</evidence>
<evidence type="ECO:0000305" key="9">
    <source>
    </source>
</evidence>
<evidence type="ECO:0007829" key="10">
    <source>
        <dbReference type="PDB" id="4FBG"/>
    </source>
</evidence>
<evidence type="ECO:0007829" key="11">
    <source>
        <dbReference type="PDB" id="4GGO"/>
    </source>
</evidence>
<proteinExistence type="evidence at protein level"/>
<keyword id="KW-0002">3D-structure</keyword>
<keyword id="KW-0275">Fatty acid biosynthesis</keyword>
<keyword id="KW-0276">Fatty acid metabolism</keyword>
<keyword id="KW-0444">Lipid biosynthesis</keyword>
<keyword id="KW-0443">Lipid metabolism</keyword>
<keyword id="KW-0520">NAD</keyword>
<keyword id="KW-0560">Oxidoreductase</keyword>
<keyword id="KW-1185">Reference proteome</keyword>
<comment type="function">
    <text evidence="2 4 5">Involved in the fatty acid synthesis (FAS II). Catalyzes the reduction of the carbon-carbon double bond of crotonyl-CoA to yield butyryl-CoA. In vitro it can also use hexenoyl-CoA and dodecenoyl-CoA as substrates (PubMed:22906002).</text>
</comment>
<comment type="catalytic activity">
    <reaction evidence="2 4 5">
        <text>a 2,3-saturated acyl-CoA + NAD(+) = a (2E)-enoyl-CoA + NADH + H(+)</text>
        <dbReference type="Rhea" id="RHEA:18177"/>
        <dbReference type="ChEBI" id="CHEBI:15378"/>
        <dbReference type="ChEBI" id="CHEBI:57540"/>
        <dbReference type="ChEBI" id="CHEBI:57945"/>
        <dbReference type="ChEBI" id="CHEBI:58856"/>
        <dbReference type="ChEBI" id="CHEBI:65111"/>
        <dbReference type="EC" id="1.3.1.44"/>
    </reaction>
</comment>
<comment type="activity regulation">
    <text evidence="4">Inhibited by lauroyl-CoA.</text>
</comment>
<comment type="biophysicochemical properties">
    <kinetics>
        <KM evidence="2">2.7 uM for crotonyl-CoA (at pH 6.2 and 30 degrees Celsius)</KM>
        <KM evidence="4">5.2 uM for NAD</KM>
        <KM evidence="4">12 uM for dodecenoyl-CoA</KM>
        <KM evidence="4">12 uM for hexenoyl-CoA</KM>
        <KM evidence="5">69.7 uM for NAD (at pH 6.2 and 25 degrees Celsius)</KM>
        <KM evidence="4">70 uM for crotonyl-CoA</KM>
        <KM evidence="4">190 uM for NADP</KM>
        <text evidence="4 5">kcat is 385.9 sec(-1) for reductase activity (at pH 6.2 and 25 degrees Celsius) (PubMed:23050861). kcat is 112 sec(-1) for reductase activity with hexenoyl-CoA as substrate (PubMed:22906002). kcat is 91 sec(-1) for reductase activity with crotonyl-CoA as substrate (PubMed:22906002). kcat is 90 sec(-1) for reductase activity with dodecenoyl-CoA as substrate (PubMed:22906002).</text>
    </kinetics>
</comment>
<comment type="pathway">
    <text evidence="7">Lipid metabolism; fatty acid biosynthesis.</text>
</comment>
<comment type="subunit">
    <text evidence="2 4 5">Monomer.</text>
</comment>
<comment type="biotechnology">
    <text evidence="3">Used in the biosynthesis of medium-chain volatile alcohols as biofuels engineered by microorganisms. The switch from the native flavin-dependent enoyl-CoA reductase used in the production of n-butanol, a key second-generation biofuel, to a flavin-independent trans-enoyl-CoA reductase from T.denticola leads to an order of magnitude increase in product yield in engineered E.coli.</text>
</comment>
<comment type="miscellaneous">
    <text evidence="9">Possesses high activity for the reduction reaction, but no activity for the reverse oxidation reaction.</text>
</comment>
<comment type="similarity">
    <text evidence="1">Belongs to the TER reductase family.</text>
</comment>
<accession>Q73Q47</accession>
<reference key="1">
    <citation type="journal article" date="2004" name="Proc. Natl. Acad. Sci. U.S.A.">
        <title>Comparison of the genome of the oral pathogen Treponema denticola with other spirochete genomes.</title>
        <authorList>
            <person name="Seshadri R."/>
            <person name="Myers G.S.A."/>
            <person name="Tettelin H."/>
            <person name="Eisen J.A."/>
            <person name="Heidelberg J.F."/>
            <person name="Dodson R.J."/>
            <person name="Davidsen T.M."/>
            <person name="DeBoy R.T."/>
            <person name="Fouts D.E."/>
            <person name="Haft D.H."/>
            <person name="Selengut J."/>
            <person name="Ren Q."/>
            <person name="Brinkac L.M."/>
            <person name="Madupu R."/>
            <person name="Kolonay J.F."/>
            <person name="Durkin S.A."/>
            <person name="Daugherty S.C."/>
            <person name="Shetty J."/>
            <person name="Shvartsbeyn A."/>
            <person name="Gebregeorgis E."/>
            <person name="Geer K."/>
            <person name="Tsegaye G."/>
            <person name="Malek J.A."/>
            <person name="Ayodeji B."/>
            <person name="Shatsman S."/>
            <person name="McLeod M.P."/>
            <person name="Smajs D."/>
            <person name="Howell J.K."/>
            <person name="Pal S."/>
            <person name="Amin A."/>
            <person name="Vashisth P."/>
            <person name="McNeill T.Z."/>
            <person name="Xiang Q."/>
            <person name="Sodergren E."/>
            <person name="Baca E."/>
            <person name="Weinstock G.M."/>
            <person name="Norris S.J."/>
            <person name="Fraser C.M."/>
            <person name="Paulsen I.T."/>
        </authorList>
    </citation>
    <scope>NUCLEOTIDE SEQUENCE [LARGE SCALE GENOMIC DNA]</scope>
    <source>
        <strain>ATCC 35405 / DSM 14222 / CIP 103919 / JCM 8153 / KCTC 15104</strain>
    </source>
</reference>
<reference key="2">
    <citation type="journal article" date="2007" name="FEBS Lett.">
        <title>A novel prokaryotic trans-2-enoyl-CoA reductase from the spirochete Treponema denticola.</title>
        <authorList>
            <person name="Tucci S."/>
            <person name="Martin W."/>
        </authorList>
    </citation>
    <scope>FUNCTION</scope>
    <scope>CATALYTIC ACTIVITY</scope>
    <scope>BIOPHYSICOCHEMICAL PROPERTIES</scope>
    <scope>SUBUNIT</scope>
    <source>
        <strain>ATCC 35405 / DSM 14222 / CIP 103919 / JCM 8153 / KCTC 15104</strain>
    </source>
</reference>
<reference key="3">
    <citation type="journal article" date="2011" name="Nat. Chem. Biol.">
        <title>Enzyme mechanism as a kinetic control element for designing synthetic biofuel pathways.</title>
        <authorList>
            <person name="Bond-Watts B.B."/>
            <person name="Bellerose R.J."/>
            <person name="Chang M.C."/>
        </authorList>
    </citation>
    <scope>BIOTECHNOLOGY</scope>
</reference>
<reference key="4">
    <citation type="journal article" date="2012" name="Biochemistry">
        <title>Biochemical and structural characterization of the trans-enoyl-CoA reductase from Treponema denticola.</title>
        <authorList>
            <person name="Bond-Watts B.B."/>
            <person name="Weeks A.M."/>
            <person name="Chang M.C."/>
        </authorList>
    </citation>
    <scope>X-RAY CRYSTALLOGRAPHY (2.00 ANGSTROMS)</scope>
    <scope>FUNCTION</scope>
    <scope>CATALYTIC ACTIVITY</scope>
    <scope>BIOPHYSICOCHEMICAL PROPERTIES</scope>
    <scope>MUTAGENESIS OF TYR-240; LEU-276; VAL-277; ILE-287; LEU-291; PHE-295 AND TYR-370</scope>
    <scope>ACTIVITY REGULATION</scope>
    <scope>SUBSTRATE SPECIFICITY</scope>
    <scope>SUBUNIT</scope>
    <source>
        <strain>ATCC 35405 / DSM 14222 / CIP 103919 / JCM 8153 / KCTC 15104</strain>
    </source>
</reference>
<reference key="5">
    <citation type="journal article" date="2013" name="Biochem. J.">
        <title>Structures of trans-2-enoyl-CoA reductases from Clostridium acetobutylicum and Treponema denticola: insights into the substrate specificity and the catalytic mechanism.</title>
        <authorList>
            <person name="Hu K."/>
            <person name="Zhao M."/>
            <person name="Zhang T."/>
            <person name="Zha M."/>
            <person name="Zhong C."/>
            <person name="Jiang Y."/>
            <person name="Ding J."/>
        </authorList>
    </citation>
    <scope>X-RAY CRYSTALLOGRAPHY (3.02 ANGSTROMS) IN COMPLEX WITH NAD</scope>
    <scope>FUNCTION</scope>
    <scope>CATALYTIC ACTIVITY</scope>
    <scope>BIOPHYSICOCHEMICAL PROPERTIES</scope>
    <scope>SUBUNIT</scope>
    <source>
        <strain>ATCC 35405 / DSM 14222 / CIP 103919 / JCM 8153 / KCTC 15104</strain>
    </source>
</reference>
<protein>
    <recommendedName>
        <fullName evidence="6">Trans-2-enoyl-CoA reductase [NADH]</fullName>
        <shortName evidence="6">TER</shortName>
        <ecNumber evidence="2 4 5">1.3.1.44</ecNumber>
    </recommendedName>
</protein>
<dbReference type="EC" id="1.3.1.44" evidence="2 4 5"/>
<dbReference type="EMBL" id="AE017226">
    <property type="protein sequence ID" value="AAS11092.1"/>
    <property type="molecule type" value="Genomic_DNA"/>
</dbReference>
<dbReference type="RefSeq" id="NP_971211.1">
    <property type="nucleotide sequence ID" value="NC_002967.9"/>
</dbReference>
<dbReference type="RefSeq" id="WP_002681770.1">
    <property type="nucleotide sequence ID" value="NC_002967.9"/>
</dbReference>
<dbReference type="PDB" id="4FBG">
    <property type="method" value="X-ray"/>
    <property type="resolution" value="3.02 A"/>
    <property type="chains" value="A/B/C/D/E/F/G/H/I/J/K/L/M/N/O/P=1-397"/>
</dbReference>
<dbReference type="PDB" id="4GGO">
    <property type="method" value="X-ray"/>
    <property type="resolution" value="2.00 A"/>
    <property type="chains" value="A/B/C/D=1-397"/>
</dbReference>
<dbReference type="PDB" id="4GGP">
    <property type="method" value="X-ray"/>
    <property type="resolution" value="2.05 A"/>
    <property type="chains" value="A/B/C/D=1-397"/>
</dbReference>
<dbReference type="PDBsum" id="4FBG"/>
<dbReference type="PDBsum" id="4GGO"/>
<dbReference type="PDBsum" id="4GGP"/>
<dbReference type="SMR" id="Q73Q47"/>
<dbReference type="STRING" id="243275.TDE_0597"/>
<dbReference type="PaxDb" id="243275-TDE_0597"/>
<dbReference type="GeneID" id="2741560"/>
<dbReference type="KEGG" id="tde:TDE_0597"/>
<dbReference type="PATRIC" id="fig|243275.7.peg.577"/>
<dbReference type="eggNOG" id="COG3007">
    <property type="taxonomic scope" value="Bacteria"/>
</dbReference>
<dbReference type="HOGENOM" id="CLU_057698_1_0_12"/>
<dbReference type="OrthoDB" id="9802260at2"/>
<dbReference type="BRENDA" id="1.3.1.44">
    <property type="organism ID" value="6426"/>
</dbReference>
<dbReference type="UniPathway" id="UPA00094"/>
<dbReference type="EvolutionaryTrace" id="Q73Q47"/>
<dbReference type="Proteomes" id="UP000008212">
    <property type="component" value="Chromosome"/>
</dbReference>
<dbReference type="GO" id="GO:0004318">
    <property type="term" value="F:enoyl-[acyl-carrier-protein] reductase (NADH) activity"/>
    <property type="evidence" value="ECO:0007669"/>
    <property type="project" value="TreeGrafter"/>
</dbReference>
<dbReference type="GO" id="GO:0051287">
    <property type="term" value="F:NAD binding"/>
    <property type="evidence" value="ECO:0000314"/>
    <property type="project" value="UniProtKB"/>
</dbReference>
<dbReference type="GO" id="GO:0050343">
    <property type="term" value="F:trans-2-enoyl-CoA reductase (NADH) activity"/>
    <property type="evidence" value="ECO:0000314"/>
    <property type="project" value="UniProtKB"/>
</dbReference>
<dbReference type="GO" id="GO:0006633">
    <property type="term" value="P:fatty acid biosynthetic process"/>
    <property type="evidence" value="ECO:0000314"/>
    <property type="project" value="UniProtKB"/>
</dbReference>
<dbReference type="Gene3D" id="3.40.50.720">
    <property type="entry name" value="NAD(P)-binding Rossmann-like Domain"/>
    <property type="match status" value="1"/>
</dbReference>
<dbReference type="HAMAP" id="MF_01838">
    <property type="entry name" value="FabV_reductase"/>
    <property type="match status" value="1"/>
</dbReference>
<dbReference type="InterPro" id="IPR024906">
    <property type="entry name" value="Eno_Rdtase_FAD-bd_dom"/>
</dbReference>
<dbReference type="InterPro" id="IPR024910">
    <property type="entry name" value="Enoyl-CoA_Rdtase_cat_dom"/>
</dbReference>
<dbReference type="InterPro" id="IPR050048">
    <property type="entry name" value="FabV-like_NADH_b"/>
</dbReference>
<dbReference type="InterPro" id="IPR010758">
    <property type="entry name" value="Trans-2-enoyl-CoA_reductase"/>
</dbReference>
<dbReference type="NCBIfam" id="NF043048">
    <property type="entry name" value="EnoyACPredFabV"/>
    <property type="match status" value="1"/>
</dbReference>
<dbReference type="NCBIfam" id="NF010177">
    <property type="entry name" value="PRK13656.1"/>
    <property type="match status" value="1"/>
</dbReference>
<dbReference type="PANTHER" id="PTHR37480">
    <property type="entry name" value="ENOYL-[ACYL-CARRIER-PROTEIN] REDUCTASE [NADH]"/>
    <property type="match status" value="1"/>
</dbReference>
<dbReference type="PANTHER" id="PTHR37480:SF1">
    <property type="entry name" value="ENOYL-[ACYL-CARRIER-PROTEIN] REDUCTASE [NADH]"/>
    <property type="match status" value="1"/>
</dbReference>
<dbReference type="Pfam" id="PF07055">
    <property type="entry name" value="Eno-Rase_FAD_bd"/>
    <property type="match status" value="1"/>
</dbReference>
<dbReference type="Pfam" id="PF12242">
    <property type="entry name" value="Eno-Rase_NADH_b"/>
    <property type="match status" value="1"/>
</dbReference>
<dbReference type="Pfam" id="PF12241">
    <property type="entry name" value="Enoyl_reductase"/>
    <property type="match status" value="1"/>
</dbReference>
<feature type="chain" id="PRO_0000220050" description="Trans-2-enoyl-CoA reductase [NADH]">
    <location>
        <begin position="1"/>
        <end position="397"/>
    </location>
</feature>
<feature type="active site" description="Proton donor" evidence="1 8 9">
    <location>
        <position position="240"/>
    </location>
</feature>
<feature type="binding site" evidence="5">
    <location>
        <begin position="53"/>
        <end position="58"/>
    </location>
    <ligand>
        <name>NAD(+)</name>
        <dbReference type="ChEBI" id="CHEBI:57540"/>
    </ligand>
</feature>
<feature type="binding site" evidence="5">
    <location>
        <begin position="79"/>
        <end position="80"/>
    </location>
    <ligand>
        <name>NAD(+)</name>
        <dbReference type="ChEBI" id="CHEBI:57540"/>
    </ligand>
</feature>
<feature type="binding site" evidence="5">
    <location>
        <begin position="116"/>
        <end position="117"/>
    </location>
    <ligand>
        <name>NAD(+)</name>
        <dbReference type="ChEBI" id="CHEBI:57540"/>
    </ligand>
</feature>
<feature type="binding site" evidence="5">
    <location>
        <begin position="144"/>
        <end position="145"/>
    </location>
    <ligand>
        <name>NAD(+)</name>
        <dbReference type="ChEBI" id="CHEBI:57540"/>
    </ligand>
</feature>
<feature type="binding site" evidence="5">
    <location>
        <position position="230"/>
    </location>
    <ligand>
        <name>substrate</name>
    </ligand>
</feature>
<feature type="binding site" evidence="5">
    <location>
        <position position="249"/>
    </location>
    <ligand>
        <name>NAD(+)</name>
        <dbReference type="ChEBI" id="CHEBI:57540"/>
    </ligand>
</feature>
<feature type="binding site" evidence="5">
    <location>
        <begin position="276"/>
        <end position="278"/>
    </location>
    <ligand>
        <name>NAD(+)</name>
        <dbReference type="ChEBI" id="CHEBI:57540"/>
    </ligand>
</feature>
<feature type="site" description="Plays an important role in discriminating NADH against NADPH" evidence="5">
    <location>
        <position position="80"/>
    </location>
</feature>
<feature type="mutagenesis site" description="Loss of reductase activity, but no significant change in the affinity for crotonyl-CoA." evidence="4">
    <original>Y</original>
    <variation>F</variation>
    <location>
        <position position="240"/>
    </location>
</feature>
<feature type="mutagenesis site" description="Significant decrease of the catalytic efficiency; when associated with A-277. The catalytic efficiency is slightly reduces and the affinity is relatively similar to wild-type; when associated with A-277 and A-295." evidence="4">
    <original>L</original>
    <variation>A</variation>
    <location>
        <position position="276"/>
    </location>
</feature>
<feature type="mutagenesis site" description="Significant decrease of the catalytic efficiency; when associated with A-276. The catalytic efficiency is slightly reduces and the affinity is relatively similar to wild-type; when associated with A-276 and A-295." evidence="4">
    <original>V</original>
    <variation>A</variation>
    <location>
        <position position="277"/>
    </location>
</feature>
<feature type="mutagenesis site" description="Shows 7-, 13- and 15-fold decrease of catalytic efficiency of the reductase activity for hexenoyl-CoA, crotonyl-CoA and dodecenoyl-CoA, respectively. The affinity is relatively similar to wild-type. This mutation may increase the accessibility of the longer acyl chain to the active site pocket." evidence="4">
    <original>I</original>
    <variation>A</variation>
    <location>
        <position position="287"/>
    </location>
</feature>
<feature type="mutagenesis site" description="The catalytic efficiency and affinity are relatively similar to wild-type toward crotonyl-CoA and hexenoyl-CoA." evidence="4">
    <original>L</original>
    <variation>A</variation>
    <location>
        <position position="291"/>
    </location>
</feature>
<feature type="mutagenesis site" description="The catalytic efficiency and affinity are relatively similar to wild-type toward crotonyl-CoA and hexenoyl-CoA. The catalytic efficiency is slightly reduces and the affinity is relatively similar to wild-type; when associated with A-276 and A-277." evidence="4">
    <original>F</original>
    <variation>A</variation>
    <location>
        <position position="295"/>
    </location>
</feature>
<feature type="mutagenesis site" description="The catalytic efficiency and affinity are relatively similar to wild-type toward crotonyl-CoA and hexenoyl-CoA." evidence="4">
    <original>Y</original>
    <variation>A</variation>
    <location>
        <position position="370"/>
    </location>
</feature>
<feature type="helix" evidence="11">
    <location>
        <begin position="17"/>
        <end position="34"/>
    </location>
</feature>
<feature type="helix" evidence="11">
    <location>
        <begin position="37"/>
        <end position="40"/>
    </location>
</feature>
<feature type="strand" evidence="10">
    <location>
        <begin position="41"/>
        <end position="43"/>
    </location>
</feature>
<feature type="strand" evidence="11">
    <location>
        <begin position="48"/>
        <end position="53"/>
    </location>
</feature>
<feature type="helix" evidence="11">
    <location>
        <begin position="57"/>
        <end position="70"/>
    </location>
</feature>
<feature type="strand" evidence="11">
    <location>
        <begin position="73"/>
        <end position="78"/>
    </location>
</feature>
<feature type="strand" evidence="11">
    <location>
        <begin position="85"/>
        <end position="87"/>
    </location>
</feature>
<feature type="helix" evidence="11">
    <location>
        <begin position="91"/>
        <end position="106"/>
    </location>
</feature>
<feature type="strand" evidence="11">
    <location>
        <begin position="110"/>
        <end position="115"/>
    </location>
</feature>
<feature type="helix" evidence="11">
    <location>
        <begin position="120"/>
        <end position="132"/>
    </location>
</feature>
<feature type="strand" evidence="11">
    <location>
        <begin position="137"/>
        <end position="142"/>
    </location>
</feature>
<feature type="strand" evidence="11">
    <location>
        <begin position="147"/>
        <end position="150"/>
    </location>
</feature>
<feature type="turn" evidence="11">
    <location>
        <begin position="152"/>
        <end position="154"/>
    </location>
</feature>
<feature type="strand" evidence="11">
    <location>
        <begin position="157"/>
        <end position="159"/>
    </location>
</feature>
<feature type="strand" evidence="11">
    <location>
        <begin position="165"/>
        <end position="167"/>
    </location>
</feature>
<feature type="strand" evidence="11">
    <location>
        <begin position="169"/>
        <end position="174"/>
    </location>
</feature>
<feature type="turn" evidence="11">
    <location>
        <begin position="176"/>
        <end position="178"/>
    </location>
</feature>
<feature type="strand" evidence="11">
    <location>
        <begin position="181"/>
        <end position="186"/>
    </location>
</feature>
<feature type="helix" evidence="11">
    <location>
        <begin position="191"/>
        <end position="201"/>
    </location>
</feature>
<feature type="helix" evidence="11">
    <location>
        <begin position="204"/>
        <end position="215"/>
    </location>
</feature>
<feature type="strand" evidence="11">
    <location>
        <begin position="219"/>
        <end position="229"/>
    </location>
</feature>
<feature type="helix" evidence="11">
    <location>
        <begin position="234"/>
        <end position="236"/>
    </location>
</feature>
<feature type="helix" evidence="11">
    <location>
        <begin position="237"/>
        <end position="240"/>
    </location>
</feature>
<feature type="helix" evidence="11">
    <location>
        <begin position="244"/>
        <end position="262"/>
    </location>
</feature>
<feature type="strand" evidence="11">
    <location>
        <begin position="266"/>
        <end position="272"/>
    </location>
</feature>
<feature type="helix" evidence="11">
    <location>
        <begin position="281"/>
        <end position="283"/>
    </location>
</feature>
<feature type="strand" evidence="11">
    <location>
        <begin position="284"/>
        <end position="286"/>
    </location>
</feature>
<feature type="helix" evidence="11">
    <location>
        <begin position="287"/>
        <end position="301"/>
    </location>
</feature>
<feature type="helix" evidence="11">
    <location>
        <begin position="307"/>
        <end position="317"/>
    </location>
</feature>
<feature type="strand" evidence="11">
    <location>
        <begin position="334"/>
        <end position="336"/>
    </location>
</feature>
<feature type="turn" evidence="11">
    <location>
        <begin position="338"/>
        <end position="341"/>
    </location>
</feature>
<feature type="helix" evidence="11">
    <location>
        <begin position="343"/>
        <end position="355"/>
    </location>
</feature>
<feature type="turn" evidence="11">
    <location>
        <begin position="358"/>
        <end position="360"/>
    </location>
</feature>
<feature type="helix" evidence="11">
    <location>
        <begin position="361"/>
        <end position="364"/>
    </location>
</feature>
<feature type="helix" evidence="11">
    <location>
        <begin position="367"/>
        <end position="376"/>
    </location>
</feature>
<feature type="turn" evidence="11">
    <location>
        <begin position="377"/>
        <end position="379"/>
    </location>
</feature>
<feature type="strand" evidence="11">
    <location>
        <begin position="387"/>
        <end position="389"/>
    </location>
</feature>
<name>FABV_TREDE</name>
<sequence length="397" mass="43759">MIVKPMVRNNICLNAHPQGCKKGVEDQIEYTKKRITAEVKAGAKAPKNVLVLGCSNGYGLASRITAAFGYGAATIGVSFEKAGSETKYGTPGWYNNLAFDEAAKREGLYSVTIDGDAFSDEIKAQVIEEAKKKGIKFDLIVYSLASPVRTDPDTGIMHKSVLKPFGKTFTGKTVDPFTGELKEISAEPANDEEAAATVKVMGGEDWERWIKQLSKEGLLEEGCITLAYSYIGPEATQALYRKGTIGKAKEHLEATAHRLNKENPSIRAFVSVNKGLVTRASAVIPVIPLYLASLFKVMKEKGNHEGCIEQITRLYAERLYRKDGTIPVDEENRIRIDDWELEEDVQKAVSALMEKVTGENAESLTDLAGYRHDFLASNGFDVEGINYEAEVERFDRI</sequence>